<gene>
    <name evidence="1" type="primary">mscL</name>
    <name type="ordered locus">lpp2606</name>
</gene>
<name>MSCL_LEGPA</name>
<keyword id="KW-0997">Cell inner membrane</keyword>
<keyword id="KW-1003">Cell membrane</keyword>
<keyword id="KW-0407">Ion channel</keyword>
<keyword id="KW-0406">Ion transport</keyword>
<keyword id="KW-0472">Membrane</keyword>
<keyword id="KW-0812">Transmembrane</keyword>
<keyword id="KW-1133">Transmembrane helix</keyword>
<keyword id="KW-0813">Transport</keyword>
<comment type="function">
    <text evidence="1">Channel that opens in response to stretch forces in the membrane lipid bilayer. May participate in the regulation of osmotic pressure changes within the cell.</text>
</comment>
<comment type="subunit">
    <text evidence="1">Homopentamer.</text>
</comment>
<comment type="subcellular location">
    <subcellularLocation>
        <location evidence="1">Cell inner membrane</location>
        <topology evidence="1">Multi-pass membrane protein</topology>
    </subcellularLocation>
</comment>
<comment type="similarity">
    <text evidence="1">Belongs to the MscL family.</text>
</comment>
<dbReference type="EMBL" id="CR628336">
    <property type="protein sequence ID" value="CAH13759.1"/>
    <property type="molecule type" value="Genomic_DNA"/>
</dbReference>
<dbReference type="RefSeq" id="WP_015961673.1">
    <property type="nucleotide sequence ID" value="NC_006368.1"/>
</dbReference>
<dbReference type="SMR" id="Q5X1Y7"/>
<dbReference type="KEGG" id="lpp:lpp2606"/>
<dbReference type="LegioList" id="lpp2606"/>
<dbReference type="HOGENOM" id="CLU_095787_0_0_6"/>
<dbReference type="GO" id="GO:0005886">
    <property type="term" value="C:plasma membrane"/>
    <property type="evidence" value="ECO:0007669"/>
    <property type="project" value="UniProtKB-SubCell"/>
</dbReference>
<dbReference type="GO" id="GO:0008381">
    <property type="term" value="F:mechanosensitive monoatomic ion channel activity"/>
    <property type="evidence" value="ECO:0007669"/>
    <property type="project" value="UniProtKB-UniRule"/>
</dbReference>
<dbReference type="Gene3D" id="1.10.1200.120">
    <property type="entry name" value="Large-conductance mechanosensitive channel, MscL, domain 1"/>
    <property type="match status" value="1"/>
</dbReference>
<dbReference type="HAMAP" id="MF_00115">
    <property type="entry name" value="MscL"/>
    <property type="match status" value="1"/>
</dbReference>
<dbReference type="InterPro" id="IPR019823">
    <property type="entry name" value="Mechanosensitive_channel_CS"/>
</dbReference>
<dbReference type="InterPro" id="IPR001185">
    <property type="entry name" value="MS_channel"/>
</dbReference>
<dbReference type="InterPro" id="IPR037673">
    <property type="entry name" value="MSC/AndL"/>
</dbReference>
<dbReference type="InterPro" id="IPR036019">
    <property type="entry name" value="MscL_channel"/>
</dbReference>
<dbReference type="NCBIfam" id="TIGR00220">
    <property type="entry name" value="mscL"/>
    <property type="match status" value="1"/>
</dbReference>
<dbReference type="NCBIfam" id="NF001843">
    <property type="entry name" value="PRK00567.1-4"/>
    <property type="match status" value="1"/>
</dbReference>
<dbReference type="PANTHER" id="PTHR30266:SF2">
    <property type="entry name" value="LARGE-CONDUCTANCE MECHANOSENSITIVE CHANNEL"/>
    <property type="match status" value="1"/>
</dbReference>
<dbReference type="PANTHER" id="PTHR30266">
    <property type="entry name" value="MECHANOSENSITIVE CHANNEL MSCL"/>
    <property type="match status" value="1"/>
</dbReference>
<dbReference type="Pfam" id="PF01741">
    <property type="entry name" value="MscL"/>
    <property type="match status" value="1"/>
</dbReference>
<dbReference type="PRINTS" id="PR01264">
    <property type="entry name" value="MECHCHANNEL"/>
</dbReference>
<dbReference type="SUPFAM" id="SSF81330">
    <property type="entry name" value="Gated mechanosensitive channel"/>
    <property type="match status" value="1"/>
</dbReference>
<dbReference type="PROSITE" id="PS01327">
    <property type="entry name" value="MSCL"/>
    <property type="match status" value="1"/>
</dbReference>
<sequence>MSLLKEFKEFAMRGNVIDLAVAVVMGVAFNKIVTALVDGIIMPCVGLLLGGINIAGLSFTVGDAQIKWGSFLQNVIDFIIVAFAIFVLIKLINLLQRKKENEPEPVTPEIQLLTEIRDLLARNSSKI</sequence>
<accession>Q5X1Y7</accession>
<proteinExistence type="inferred from homology"/>
<organism>
    <name type="scientific">Legionella pneumophila (strain Paris)</name>
    <dbReference type="NCBI Taxonomy" id="297246"/>
    <lineage>
        <taxon>Bacteria</taxon>
        <taxon>Pseudomonadati</taxon>
        <taxon>Pseudomonadota</taxon>
        <taxon>Gammaproteobacteria</taxon>
        <taxon>Legionellales</taxon>
        <taxon>Legionellaceae</taxon>
        <taxon>Legionella</taxon>
    </lineage>
</organism>
<reference key="1">
    <citation type="journal article" date="2004" name="Nat. Genet.">
        <title>Evidence in the Legionella pneumophila genome for exploitation of host cell functions and high genome plasticity.</title>
        <authorList>
            <person name="Cazalet C."/>
            <person name="Rusniok C."/>
            <person name="Brueggemann H."/>
            <person name="Zidane N."/>
            <person name="Magnier A."/>
            <person name="Ma L."/>
            <person name="Tichit M."/>
            <person name="Jarraud S."/>
            <person name="Bouchier C."/>
            <person name="Vandenesch F."/>
            <person name="Kunst F."/>
            <person name="Etienne J."/>
            <person name="Glaser P."/>
            <person name="Buchrieser C."/>
        </authorList>
    </citation>
    <scope>NUCLEOTIDE SEQUENCE [LARGE SCALE GENOMIC DNA]</scope>
    <source>
        <strain>Paris</strain>
    </source>
</reference>
<protein>
    <recommendedName>
        <fullName evidence="1">Large-conductance mechanosensitive channel</fullName>
    </recommendedName>
</protein>
<feature type="chain" id="PRO_0000238010" description="Large-conductance mechanosensitive channel">
    <location>
        <begin position="1"/>
        <end position="127"/>
    </location>
</feature>
<feature type="transmembrane region" description="Helical" evidence="1">
    <location>
        <begin position="9"/>
        <end position="29"/>
    </location>
</feature>
<feature type="transmembrane region" description="Helical" evidence="1">
    <location>
        <begin position="32"/>
        <end position="52"/>
    </location>
</feature>
<feature type="transmembrane region" description="Helical" evidence="1">
    <location>
        <begin position="75"/>
        <end position="95"/>
    </location>
</feature>
<evidence type="ECO:0000255" key="1">
    <source>
        <dbReference type="HAMAP-Rule" id="MF_00115"/>
    </source>
</evidence>